<sequence length="837" mass="92307">MVSPGQNDLSSDKSQIDPFVKKQNAKLTQVIQNFFSKSVQIVLQSRIQSESHNKEEQLKVGGDVGGHNVSSKINKWFNLHMYNDNLPKEELKLWKNINDVSQMPPMIIEVYLDLRQLTAIQTVILRDDNGNPWTVAKGGSKKHEVVLERWLIEFDANTVSGTIVDELPLIYKQAIILFRSLYGYTRLMPTFKLKKNLNKSNLNIGCKILDGKQPISSKGRIGLSKSIIPHQMLTTESHMSHKHFLPIQTTLGTLKISIAYRNHHEFSIHDNEELLSTHFVNIDDNDKDSEITPVEIEFKEELKIDRDSTTNEKVNEPEDDESHHADVESSQEHLQSEEPDESFEQDAKHISGSRKKFSISNNASMSLSPCSSGPQTVTEDSPSHNKPSANTTPIVSQRPTINPFKVGSISTSPPATTNFGGSSLERKVSITSNKSASNASLAAMLRNPRSSTSSTNTTANIPIANNNSNNQYNSTFPRSVSSSHGSNLAHDNDNLLGFSNPDNTSNTPRFSSSFGSRASRRFSNTSGRQSSLPSGNMNDTSLLATSAGSASSDAPMSGLYIDDDIGDFVRMIDSKSDLRFSGYNSNNDSKISYNQGSNSQIDALNKFQMLKNQHQQLSDSVSASLILHHNQLSGSRPSSRKSSHSIHSPPPSLPSGSYDNSHLPSINSKLRENSSTSGNDDNLARDSGTPSSRKNSFDYSTNSNTTFLKSPITNKLVSSPVTSTTPIHSCLHKTNNESGVISGLATTPSIYNDRRQIHYESVFDDDDDDYANNTADNRDQDDSLKLYLTNKLANAPKSNTNSRSLKSSTNPPNIGEDDDDDDDDLLFTMSDMNLAKH</sequence>
<dbReference type="EMBL" id="CR382137">
    <property type="protein sequence ID" value="CAR65791.1"/>
    <property type="molecule type" value="Genomic_DNA"/>
</dbReference>
<dbReference type="RefSeq" id="XP_002770448.1">
    <property type="nucleotide sequence ID" value="XM_002770402.1"/>
</dbReference>
<dbReference type="SMR" id="Q6BQ20"/>
<dbReference type="FunCoup" id="Q6BQ20">
    <property type="interactions" value="43"/>
</dbReference>
<dbReference type="STRING" id="284592.Q6BQ20"/>
<dbReference type="GeneID" id="8998709"/>
<dbReference type="KEGG" id="dha:DEHA2E09020g"/>
<dbReference type="VEuPathDB" id="FungiDB:DEHA2E09020g"/>
<dbReference type="eggNOG" id="KOG4573">
    <property type="taxonomic scope" value="Eukaryota"/>
</dbReference>
<dbReference type="HOGENOM" id="CLU_366802_0_0_1"/>
<dbReference type="InParanoid" id="Q6BQ20"/>
<dbReference type="OMA" id="FHQVGPT"/>
<dbReference type="OrthoDB" id="70161at2759"/>
<dbReference type="Proteomes" id="UP000000599">
    <property type="component" value="Chromosome E"/>
</dbReference>
<dbReference type="GO" id="GO:1990316">
    <property type="term" value="C:Atg1/ULK1 kinase complex"/>
    <property type="evidence" value="ECO:0007669"/>
    <property type="project" value="InterPro"/>
</dbReference>
<dbReference type="GO" id="GO:0005829">
    <property type="term" value="C:cytosol"/>
    <property type="evidence" value="ECO:0007669"/>
    <property type="project" value="TreeGrafter"/>
</dbReference>
<dbReference type="GO" id="GO:0000407">
    <property type="term" value="C:phagophore assembly site"/>
    <property type="evidence" value="ECO:0007669"/>
    <property type="project" value="UniProtKB-SubCell"/>
</dbReference>
<dbReference type="GO" id="GO:0000423">
    <property type="term" value="P:mitophagy"/>
    <property type="evidence" value="ECO:0007669"/>
    <property type="project" value="TreeGrafter"/>
</dbReference>
<dbReference type="GO" id="GO:0034727">
    <property type="term" value="P:piecemeal microautophagy of the nucleus"/>
    <property type="evidence" value="ECO:0007669"/>
    <property type="project" value="TreeGrafter"/>
</dbReference>
<dbReference type="GO" id="GO:0034497">
    <property type="term" value="P:protein localization to phagophore assembly site"/>
    <property type="evidence" value="ECO:0007669"/>
    <property type="project" value="TreeGrafter"/>
</dbReference>
<dbReference type="GO" id="GO:0015031">
    <property type="term" value="P:protein transport"/>
    <property type="evidence" value="ECO:0007669"/>
    <property type="project" value="UniProtKB-KW"/>
</dbReference>
<dbReference type="Gene3D" id="6.10.140.1900">
    <property type="match status" value="1"/>
</dbReference>
<dbReference type="Gene3D" id="3.30.900.10">
    <property type="entry name" value="HORMA domain"/>
    <property type="match status" value="1"/>
</dbReference>
<dbReference type="InterPro" id="IPR040182">
    <property type="entry name" value="ATG13"/>
</dbReference>
<dbReference type="InterPro" id="IPR018731">
    <property type="entry name" value="Atg13_N"/>
</dbReference>
<dbReference type="InterPro" id="IPR036570">
    <property type="entry name" value="HORMA_dom_sf"/>
</dbReference>
<dbReference type="PANTHER" id="PTHR13430">
    <property type="match status" value="1"/>
</dbReference>
<dbReference type="PANTHER" id="PTHR13430:SF4">
    <property type="entry name" value="AUTOPHAGY-RELATED PROTEIN 13"/>
    <property type="match status" value="1"/>
</dbReference>
<dbReference type="Pfam" id="PF10033">
    <property type="entry name" value="ATG13"/>
    <property type="match status" value="1"/>
</dbReference>
<protein>
    <recommendedName>
        <fullName>Autophagy-related protein 13</fullName>
    </recommendedName>
</protein>
<reference key="1">
    <citation type="journal article" date="2004" name="Nature">
        <title>Genome evolution in yeasts.</title>
        <authorList>
            <person name="Dujon B."/>
            <person name="Sherman D."/>
            <person name="Fischer G."/>
            <person name="Durrens P."/>
            <person name="Casaregola S."/>
            <person name="Lafontaine I."/>
            <person name="de Montigny J."/>
            <person name="Marck C."/>
            <person name="Neuveglise C."/>
            <person name="Talla E."/>
            <person name="Goffard N."/>
            <person name="Frangeul L."/>
            <person name="Aigle M."/>
            <person name="Anthouard V."/>
            <person name="Babour A."/>
            <person name="Barbe V."/>
            <person name="Barnay S."/>
            <person name="Blanchin S."/>
            <person name="Beckerich J.-M."/>
            <person name="Beyne E."/>
            <person name="Bleykasten C."/>
            <person name="Boisrame A."/>
            <person name="Boyer J."/>
            <person name="Cattolico L."/>
            <person name="Confanioleri F."/>
            <person name="de Daruvar A."/>
            <person name="Despons L."/>
            <person name="Fabre E."/>
            <person name="Fairhead C."/>
            <person name="Ferry-Dumazet H."/>
            <person name="Groppi A."/>
            <person name="Hantraye F."/>
            <person name="Hennequin C."/>
            <person name="Jauniaux N."/>
            <person name="Joyet P."/>
            <person name="Kachouri R."/>
            <person name="Kerrest A."/>
            <person name="Koszul R."/>
            <person name="Lemaire M."/>
            <person name="Lesur I."/>
            <person name="Ma L."/>
            <person name="Muller H."/>
            <person name="Nicaud J.-M."/>
            <person name="Nikolski M."/>
            <person name="Oztas S."/>
            <person name="Ozier-Kalogeropoulos O."/>
            <person name="Pellenz S."/>
            <person name="Potier S."/>
            <person name="Richard G.-F."/>
            <person name="Straub M.-L."/>
            <person name="Suleau A."/>
            <person name="Swennen D."/>
            <person name="Tekaia F."/>
            <person name="Wesolowski-Louvel M."/>
            <person name="Westhof E."/>
            <person name="Wirth B."/>
            <person name="Zeniou-Meyer M."/>
            <person name="Zivanovic Y."/>
            <person name="Bolotin-Fukuhara M."/>
            <person name="Thierry A."/>
            <person name="Bouchier C."/>
            <person name="Caudron B."/>
            <person name="Scarpelli C."/>
            <person name="Gaillardin C."/>
            <person name="Weissenbach J."/>
            <person name="Wincker P."/>
            <person name="Souciet J.-L."/>
        </authorList>
    </citation>
    <scope>NUCLEOTIDE SEQUENCE [LARGE SCALE GENOMIC DNA]</scope>
    <source>
        <strain>ATCC 36239 / CBS 767 / BCRC 21394 / JCM 1990 / NBRC 0083 / IGC 2968</strain>
    </source>
</reference>
<name>ATG13_DEBHA</name>
<comment type="function">
    <text evidence="1">Activates the ATG1 kinase in a nutritional condition dependent manner through the TOR pathway, leading to autophagy. Also involved in cytoplasm to vacuole transport (Cvt) and more specifically in Cvt vesicle formation. Seems to play a role in the switching machinery regulating the conversion between the Cvt pathway and autophagy. Finally, ATG13 is also required for glycogen storage during stationary phase (By similarity).</text>
</comment>
<comment type="subunit">
    <text evidence="1">Interacts with ATG1 to form the ATG1-ATG13 kinase complex.</text>
</comment>
<comment type="subcellular location">
    <subcellularLocation>
        <location evidence="2">Cytoplasm</location>
    </subcellularLocation>
    <subcellularLocation>
        <location evidence="2">Preautophagosomal structure</location>
    </subcellularLocation>
</comment>
<comment type="similarity">
    <text evidence="4">Belongs to the ATG13 family. Fungi subfamily.</text>
</comment>
<evidence type="ECO:0000250" key="1"/>
<evidence type="ECO:0000250" key="2">
    <source>
        <dbReference type="UniProtKB" id="Q06628"/>
    </source>
</evidence>
<evidence type="ECO:0000256" key="3">
    <source>
        <dbReference type="SAM" id="MobiDB-lite"/>
    </source>
</evidence>
<evidence type="ECO:0000305" key="4"/>
<feature type="chain" id="PRO_0000157968" description="Autophagy-related protein 13">
    <location>
        <begin position="1"/>
        <end position="837"/>
    </location>
</feature>
<feature type="region of interest" description="Disordered" evidence="3">
    <location>
        <begin position="302"/>
        <end position="400"/>
    </location>
</feature>
<feature type="region of interest" description="Disordered" evidence="3">
    <location>
        <begin position="446"/>
        <end position="540"/>
    </location>
</feature>
<feature type="region of interest" description="Disordered" evidence="3">
    <location>
        <begin position="631"/>
        <end position="704"/>
    </location>
</feature>
<feature type="region of interest" description="Disordered" evidence="3">
    <location>
        <begin position="793"/>
        <end position="837"/>
    </location>
</feature>
<feature type="compositionally biased region" description="Basic and acidic residues" evidence="3">
    <location>
        <begin position="302"/>
        <end position="336"/>
    </location>
</feature>
<feature type="compositionally biased region" description="Polar residues" evidence="3">
    <location>
        <begin position="358"/>
        <end position="400"/>
    </location>
</feature>
<feature type="compositionally biased region" description="Low complexity" evidence="3">
    <location>
        <begin position="450"/>
        <end position="475"/>
    </location>
</feature>
<feature type="compositionally biased region" description="Polar residues" evidence="3">
    <location>
        <begin position="476"/>
        <end position="486"/>
    </location>
</feature>
<feature type="compositionally biased region" description="Low complexity" evidence="3">
    <location>
        <begin position="509"/>
        <end position="523"/>
    </location>
</feature>
<feature type="compositionally biased region" description="Polar residues" evidence="3">
    <location>
        <begin position="524"/>
        <end position="538"/>
    </location>
</feature>
<feature type="compositionally biased region" description="Polar residues" evidence="3">
    <location>
        <begin position="658"/>
        <end position="680"/>
    </location>
</feature>
<feature type="compositionally biased region" description="Polar residues" evidence="3">
    <location>
        <begin position="688"/>
        <end position="704"/>
    </location>
</feature>
<feature type="compositionally biased region" description="Polar residues" evidence="3">
    <location>
        <begin position="796"/>
        <end position="812"/>
    </location>
</feature>
<feature type="compositionally biased region" description="Acidic residues" evidence="3">
    <location>
        <begin position="815"/>
        <end position="825"/>
    </location>
</feature>
<keyword id="KW-0072">Autophagy</keyword>
<keyword id="KW-0963">Cytoplasm</keyword>
<keyword id="KW-0653">Protein transport</keyword>
<keyword id="KW-1185">Reference proteome</keyword>
<keyword id="KW-0813">Transport</keyword>
<organism>
    <name type="scientific">Debaryomyces hansenii (strain ATCC 36239 / CBS 767 / BCRC 21394 / JCM 1990 / NBRC 0083 / IGC 2968)</name>
    <name type="common">Yeast</name>
    <name type="synonym">Torulaspora hansenii</name>
    <dbReference type="NCBI Taxonomy" id="284592"/>
    <lineage>
        <taxon>Eukaryota</taxon>
        <taxon>Fungi</taxon>
        <taxon>Dikarya</taxon>
        <taxon>Ascomycota</taxon>
        <taxon>Saccharomycotina</taxon>
        <taxon>Pichiomycetes</taxon>
        <taxon>Debaryomycetaceae</taxon>
        <taxon>Debaryomyces</taxon>
    </lineage>
</organism>
<accession>Q6BQ20</accession>
<accession>B5RTX9</accession>
<gene>
    <name type="primary">ATG13</name>
    <name type="ordered locus">DEHA2E09020g</name>
</gene>
<proteinExistence type="inferred from homology"/>